<protein>
    <recommendedName>
        <fullName>Death domain-containing protein CRADD</fullName>
    </recommendedName>
    <alternativeName>
        <fullName>Caspase and RIP adapter with death domain</fullName>
    </alternativeName>
</protein>
<organism>
    <name type="scientific">Pongo abelii</name>
    <name type="common">Sumatran orangutan</name>
    <name type="synonym">Pongo pygmaeus abelii</name>
    <dbReference type="NCBI Taxonomy" id="9601"/>
    <lineage>
        <taxon>Eukaryota</taxon>
        <taxon>Metazoa</taxon>
        <taxon>Chordata</taxon>
        <taxon>Craniata</taxon>
        <taxon>Vertebrata</taxon>
        <taxon>Euteleostomi</taxon>
        <taxon>Mammalia</taxon>
        <taxon>Eutheria</taxon>
        <taxon>Euarchontoglires</taxon>
        <taxon>Primates</taxon>
        <taxon>Haplorrhini</taxon>
        <taxon>Catarrhini</taxon>
        <taxon>Hominidae</taxon>
        <taxon>Pongo</taxon>
    </lineage>
</organism>
<feature type="chain" id="PRO_0000079328" description="Death domain-containing protein CRADD">
    <location>
        <begin position="1"/>
        <end position="199"/>
    </location>
</feature>
<feature type="domain" description="CARD" evidence="3">
    <location>
        <begin position="1"/>
        <end position="91"/>
    </location>
</feature>
<feature type="domain" description="Death" evidence="4">
    <location>
        <begin position="116"/>
        <end position="188"/>
    </location>
</feature>
<gene>
    <name type="primary">CRADD</name>
</gene>
<reference key="1">
    <citation type="submission" date="2004-11" db="EMBL/GenBank/DDBJ databases">
        <authorList>
            <consortium name="The German cDNA consortium"/>
        </authorList>
    </citation>
    <scope>NUCLEOTIDE SEQUENCE [LARGE SCALE MRNA]</scope>
    <source>
        <tissue>Heart</tissue>
    </source>
</reference>
<comment type="function">
    <text evidence="2">Adapter protein that associates with PIDD1 and the caspase CASP2 to form the PIDDosome, a complex that activates CASP2 and triggers apoptosis. Also recruits CASP2 to the TNFR-1 signaling complex through its interaction with RIPK1 and TRADD and may play a role in the tumor necrosis factor-mediated signaling pathway.</text>
</comment>
<comment type="subunit">
    <text evidence="2">Forms a complex named the PIDDosome with PIDD1 and CASP2. Interacts (via Death domain) with RIPK1 (via Death domain); the interaction is direct. Interacts with TRADD. Interacts with TNFRSF1A.</text>
</comment>
<comment type="subcellular location">
    <subcellularLocation>
        <location evidence="1">Cytoplasm</location>
    </subcellularLocation>
    <subcellularLocation>
        <location evidence="1">Nucleus</location>
    </subcellularLocation>
</comment>
<comment type="domain">
    <text evidence="2">The Death domain mediates the interaction with PIDD1 and the formation of a complex composed of 5 PIDD1 and 7 CRADD proteins which in turn probably recruit 7 CASP2 to form the PIDDosome. The Death domain mediates a direct interaction with the Death domain of RIPK1.</text>
</comment>
<comment type="domain">
    <text evidence="2">The CARD domain mediates a direct interaction with CASP2.</text>
</comment>
<proteinExistence type="evidence at transcript level"/>
<evidence type="ECO:0000250" key="1">
    <source>
        <dbReference type="UniProtKB" id="O88843"/>
    </source>
</evidence>
<evidence type="ECO:0000250" key="2">
    <source>
        <dbReference type="UniProtKB" id="P78560"/>
    </source>
</evidence>
<evidence type="ECO:0000255" key="3">
    <source>
        <dbReference type="PROSITE-ProRule" id="PRU00046"/>
    </source>
</evidence>
<evidence type="ECO:0000255" key="4">
    <source>
        <dbReference type="PROSITE-ProRule" id="PRU00064"/>
    </source>
</evidence>
<dbReference type="EMBL" id="CR860505">
    <property type="protein sequence ID" value="CAH92626.1"/>
    <property type="molecule type" value="mRNA"/>
</dbReference>
<dbReference type="RefSeq" id="NP_001126538.1">
    <property type="nucleotide sequence ID" value="NM_001133066.1"/>
</dbReference>
<dbReference type="RefSeq" id="XP_009246375.1">
    <property type="nucleotide sequence ID" value="XM_009248100.4"/>
</dbReference>
<dbReference type="RefSeq" id="XP_009246376.1">
    <property type="nucleotide sequence ID" value="XM_009248101.1"/>
</dbReference>
<dbReference type="SMR" id="Q5R6I4"/>
<dbReference type="FunCoup" id="Q5R6I4">
    <property type="interactions" value="773"/>
</dbReference>
<dbReference type="STRING" id="9601.ENSPPYP00000005515"/>
<dbReference type="Ensembl" id="ENSPPYT00000005728.3">
    <property type="protein sequence ID" value="ENSPPYP00000005515.2"/>
    <property type="gene ID" value="ENSPPYG00000004835.3"/>
</dbReference>
<dbReference type="GeneID" id="100173528"/>
<dbReference type="KEGG" id="pon:100173528"/>
<dbReference type="CTD" id="8738"/>
<dbReference type="eggNOG" id="ENOG502R26C">
    <property type="taxonomic scope" value="Eukaryota"/>
</dbReference>
<dbReference type="GeneTree" id="ENSGT00390000014448"/>
<dbReference type="HOGENOM" id="CLU_118159_0_0_1"/>
<dbReference type="InParanoid" id="Q5R6I4"/>
<dbReference type="OMA" id="GPEWECI"/>
<dbReference type="OrthoDB" id="10031931at2759"/>
<dbReference type="TreeFam" id="TF333055"/>
<dbReference type="Proteomes" id="UP000001595">
    <property type="component" value="Chromosome 12"/>
</dbReference>
<dbReference type="GO" id="GO:0005737">
    <property type="term" value="C:cytoplasm"/>
    <property type="evidence" value="ECO:0007669"/>
    <property type="project" value="UniProtKB-SubCell"/>
</dbReference>
<dbReference type="GO" id="GO:1905369">
    <property type="term" value="C:endopeptidase complex"/>
    <property type="evidence" value="ECO:0007669"/>
    <property type="project" value="Ensembl"/>
</dbReference>
<dbReference type="GO" id="GO:0005634">
    <property type="term" value="C:nucleus"/>
    <property type="evidence" value="ECO:0007669"/>
    <property type="project" value="UniProtKB-SubCell"/>
</dbReference>
<dbReference type="GO" id="GO:0070513">
    <property type="term" value="F:death domain binding"/>
    <property type="evidence" value="ECO:0007669"/>
    <property type="project" value="Ensembl"/>
</dbReference>
<dbReference type="GO" id="GO:0002020">
    <property type="term" value="F:protease binding"/>
    <property type="evidence" value="ECO:0007669"/>
    <property type="project" value="Ensembl"/>
</dbReference>
<dbReference type="GO" id="GO:0030674">
    <property type="term" value="F:protein-macromolecule adaptor activity"/>
    <property type="evidence" value="ECO:0007669"/>
    <property type="project" value="Ensembl"/>
</dbReference>
<dbReference type="GO" id="GO:0097190">
    <property type="term" value="P:apoptotic signaling pathway"/>
    <property type="evidence" value="ECO:0000250"/>
    <property type="project" value="UniProtKB"/>
</dbReference>
<dbReference type="GO" id="GO:0071260">
    <property type="term" value="P:cellular response to mechanical stimulus"/>
    <property type="evidence" value="ECO:0007669"/>
    <property type="project" value="Ensembl"/>
</dbReference>
<dbReference type="GO" id="GO:0030330">
    <property type="term" value="P:DNA damage response, signal transduction by p53 class mediator"/>
    <property type="evidence" value="ECO:0007669"/>
    <property type="project" value="Ensembl"/>
</dbReference>
<dbReference type="GO" id="GO:2001235">
    <property type="term" value="P:positive regulation of apoptotic signaling pathway"/>
    <property type="evidence" value="ECO:0007669"/>
    <property type="project" value="Ensembl"/>
</dbReference>
<dbReference type="CDD" id="cd08327">
    <property type="entry name" value="CARD_RAIDD"/>
    <property type="match status" value="1"/>
</dbReference>
<dbReference type="CDD" id="cd08319">
    <property type="entry name" value="Death_RAIDD"/>
    <property type="match status" value="1"/>
</dbReference>
<dbReference type="FunFam" id="1.10.533.10:FF:000007">
    <property type="entry name" value="death domain-containing protein CRADD isoform X1"/>
    <property type="match status" value="1"/>
</dbReference>
<dbReference type="FunFam" id="1.10.533.10:FF:000058">
    <property type="entry name" value="death domain-containing protein CRADD isoform X1"/>
    <property type="match status" value="1"/>
</dbReference>
<dbReference type="Gene3D" id="1.10.533.10">
    <property type="entry name" value="Death Domain, Fas"/>
    <property type="match status" value="2"/>
</dbReference>
<dbReference type="InterPro" id="IPR001315">
    <property type="entry name" value="CARD"/>
</dbReference>
<dbReference type="InterPro" id="IPR042148">
    <property type="entry name" value="CARD_RAIDD"/>
</dbReference>
<dbReference type="InterPro" id="IPR037939">
    <property type="entry name" value="CRADD"/>
</dbReference>
<dbReference type="InterPro" id="IPR037926">
    <property type="entry name" value="CRADD_Death"/>
</dbReference>
<dbReference type="InterPro" id="IPR011029">
    <property type="entry name" value="DEATH-like_dom_sf"/>
</dbReference>
<dbReference type="InterPro" id="IPR000488">
    <property type="entry name" value="Death_dom"/>
</dbReference>
<dbReference type="PANTHER" id="PTHR15034">
    <property type="entry name" value="DEATH DOMAIN-CONTAINING PROTEIN CRADD"/>
    <property type="match status" value="1"/>
</dbReference>
<dbReference type="PANTHER" id="PTHR15034:SF5">
    <property type="entry name" value="DEATH DOMAIN-CONTAINING PROTEIN CRADD"/>
    <property type="match status" value="1"/>
</dbReference>
<dbReference type="Pfam" id="PF00619">
    <property type="entry name" value="CARD"/>
    <property type="match status" value="1"/>
</dbReference>
<dbReference type="Pfam" id="PF00531">
    <property type="entry name" value="Death"/>
    <property type="match status" value="1"/>
</dbReference>
<dbReference type="SMART" id="SM00114">
    <property type="entry name" value="CARD"/>
    <property type="match status" value="1"/>
</dbReference>
<dbReference type="SMART" id="SM00005">
    <property type="entry name" value="DEATH"/>
    <property type="match status" value="1"/>
</dbReference>
<dbReference type="SUPFAM" id="SSF47986">
    <property type="entry name" value="DEATH domain"/>
    <property type="match status" value="2"/>
</dbReference>
<dbReference type="PROSITE" id="PS50209">
    <property type="entry name" value="CARD"/>
    <property type="match status" value="1"/>
</dbReference>
<dbReference type="PROSITE" id="PS50017">
    <property type="entry name" value="DEATH_DOMAIN"/>
    <property type="match status" value="1"/>
</dbReference>
<keyword id="KW-0053">Apoptosis</keyword>
<keyword id="KW-0963">Cytoplasm</keyword>
<keyword id="KW-0539">Nucleus</keyword>
<keyword id="KW-1185">Reference proteome</keyword>
<accession>Q5R6I4</accession>
<sequence length="199" mass="22725">MEARDKQVLRLLRLELGAEVLVEGLVLQYLYQEGILTENHVQEINAQTTGLRKTMLLLDILPSRGPKAFDTFLDSLQEFPWVREKLKKAREEAMTDLPAGDRLTGIPSHILNSSPSDRQINQLAQRLGPEWEPVVLSLGLSQTDIYRCKANHPHNVQSQVVEAFIRWRQRFGKQATFQSLHNGLRAVEVDPSLLLHMLE</sequence>
<name>CRADD_PONAB</name>